<dbReference type="EMBL" id="BA000003">
    <property type="protein sequence ID" value="BAB13252.1"/>
    <property type="molecule type" value="Genomic_DNA"/>
</dbReference>
<dbReference type="RefSeq" id="NP_240366.1">
    <property type="nucleotide sequence ID" value="NC_002528.1"/>
</dbReference>
<dbReference type="RefSeq" id="WP_009874510.1">
    <property type="nucleotide sequence ID" value="NZ_AP036055.1"/>
</dbReference>
<dbReference type="SMR" id="P57625"/>
<dbReference type="STRING" id="563178.BUAP5A_555"/>
<dbReference type="EnsemblBacteria" id="BAB13252">
    <property type="protein sequence ID" value="BAB13252"/>
    <property type="gene ID" value="BAB13252"/>
</dbReference>
<dbReference type="KEGG" id="buc:BU562"/>
<dbReference type="PATRIC" id="fig|107806.10.peg.565"/>
<dbReference type="eggNOG" id="COG0359">
    <property type="taxonomic scope" value="Bacteria"/>
</dbReference>
<dbReference type="HOGENOM" id="CLU_078938_4_1_6"/>
<dbReference type="Proteomes" id="UP000001806">
    <property type="component" value="Chromosome"/>
</dbReference>
<dbReference type="GO" id="GO:1990904">
    <property type="term" value="C:ribonucleoprotein complex"/>
    <property type="evidence" value="ECO:0007669"/>
    <property type="project" value="UniProtKB-KW"/>
</dbReference>
<dbReference type="GO" id="GO:0005840">
    <property type="term" value="C:ribosome"/>
    <property type="evidence" value="ECO:0007669"/>
    <property type="project" value="UniProtKB-KW"/>
</dbReference>
<dbReference type="GO" id="GO:0019843">
    <property type="term" value="F:rRNA binding"/>
    <property type="evidence" value="ECO:0007669"/>
    <property type="project" value="UniProtKB-UniRule"/>
</dbReference>
<dbReference type="GO" id="GO:0003735">
    <property type="term" value="F:structural constituent of ribosome"/>
    <property type="evidence" value="ECO:0007669"/>
    <property type="project" value="InterPro"/>
</dbReference>
<dbReference type="GO" id="GO:0006412">
    <property type="term" value="P:translation"/>
    <property type="evidence" value="ECO:0007669"/>
    <property type="project" value="UniProtKB-UniRule"/>
</dbReference>
<dbReference type="Gene3D" id="3.10.430.100">
    <property type="entry name" value="Ribosomal protein L9, C-terminal domain"/>
    <property type="match status" value="1"/>
</dbReference>
<dbReference type="Gene3D" id="3.40.5.10">
    <property type="entry name" value="Ribosomal protein L9, N-terminal domain"/>
    <property type="match status" value="1"/>
</dbReference>
<dbReference type="HAMAP" id="MF_00503">
    <property type="entry name" value="Ribosomal_bL9"/>
    <property type="match status" value="1"/>
</dbReference>
<dbReference type="InterPro" id="IPR000244">
    <property type="entry name" value="Ribosomal_bL9"/>
</dbReference>
<dbReference type="InterPro" id="IPR009027">
    <property type="entry name" value="Ribosomal_bL9/RNase_H1_N"/>
</dbReference>
<dbReference type="InterPro" id="IPR020594">
    <property type="entry name" value="Ribosomal_bL9_bac/chp"/>
</dbReference>
<dbReference type="InterPro" id="IPR020069">
    <property type="entry name" value="Ribosomal_bL9_C"/>
</dbReference>
<dbReference type="InterPro" id="IPR036791">
    <property type="entry name" value="Ribosomal_bL9_C_sf"/>
</dbReference>
<dbReference type="InterPro" id="IPR020070">
    <property type="entry name" value="Ribosomal_bL9_N"/>
</dbReference>
<dbReference type="InterPro" id="IPR036935">
    <property type="entry name" value="Ribosomal_bL9_N_sf"/>
</dbReference>
<dbReference type="NCBIfam" id="TIGR00158">
    <property type="entry name" value="L9"/>
    <property type="match status" value="1"/>
</dbReference>
<dbReference type="PANTHER" id="PTHR21368">
    <property type="entry name" value="50S RIBOSOMAL PROTEIN L9"/>
    <property type="match status" value="1"/>
</dbReference>
<dbReference type="Pfam" id="PF03948">
    <property type="entry name" value="Ribosomal_L9_C"/>
    <property type="match status" value="1"/>
</dbReference>
<dbReference type="Pfam" id="PF01281">
    <property type="entry name" value="Ribosomal_L9_N"/>
    <property type="match status" value="1"/>
</dbReference>
<dbReference type="SUPFAM" id="SSF55658">
    <property type="entry name" value="L9 N-domain-like"/>
    <property type="match status" value="1"/>
</dbReference>
<dbReference type="SUPFAM" id="SSF55653">
    <property type="entry name" value="Ribosomal protein L9 C-domain"/>
    <property type="match status" value="1"/>
</dbReference>
<dbReference type="PROSITE" id="PS00651">
    <property type="entry name" value="RIBOSOMAL_L9"/>
    <property type="match status" value="1"/>
</dbReference>
<protein>
    <recommendedName>
        <fullName evidence="1">Large ribosomal subunit protein bL9</fullName>
    </recommendedName>
    <alternativeName>
        <fullName evidence="2">50S ribosomal protein L9</fullName>
    </alternativeName>
</protein>
<gene>
    <name evidence="1" type="primary">rplI</name>
    <name type="ordered locus">BU562</name>
</gene>
<feature type="chain" id="PRO_0000176622" description="Large ribosomal subunit protein bL9">
    <location>
        <begin position="1"/>
        <end position="150"/>
    </location>
</feature>
<accession>P57625</accession>
<reference key="1">
    <citation type="journal article" date="2000" name="Nature">
        <title>Genome sequence of the endocellular bacterial symbiont of aphids Buchnera sp. APS.</title>
        <authorList>
            <person name="Shigenobu S."/>
            <person name="Watanabe H."/>
            <person name="Hattori M."/>
            <person name="Sakaki Y."/>
            <person name="Ishikawa H."/>
        </authorList>
    </citation>
    <scope>NUCLEOTIDE SEQUENCE [LARGE SCALE GENOMIC DNA]</scope>
    <source>
        <strain>APS</strain>
    </source>
</reference>
<organism>
    <name type="scientific">Buchnera aphidicola subsp. Acyrthosiphon pisum (strain APS)</name>
    <name type="common">Acyrthosiphon pisum symbiotic bacterium</name>
    <dbReference type="NCBI Taxonomy" id="107806"/>
    <lineage>
        <taxon>Bacteria</taxon>
        <taxon>Pseudomonadati</taxon>
        <taxon>Pseudomonadota</taxon>
        <taxon>Gammaproteobacteria</taxon>
        <taxon>Enterobacterales</taxon>
        <taxon>Erwiniaceae</taxon>
        <taxon>Buchnera</taxon>
    </lineage>
</organism>
<name>RL9_BUCAI</name>
<proteinExistence type="inferred from homology"/>
<comment type="function">
    <text evidence="1">Binds to the 23S rRNA.</text>
</comment>
<comment type="similarity">
    <text evidence="1">Belongs to the bacterial ribosomal protein bL9 family.</text>
</comment>
<evidence type="ECO:0000255" key="1">
    <source>
        <dbReference type="HAMAP-Rule" id="MF_00503"/>
    </source>
</evidence>
<evidence type="ECO:0000305" key="2"/>
<keyword id="KW-1185">Reference proteome</keyword>
<keyword id="KW-0687">Ribonucleoprotein</keyword>
<keyword id="KW-0689">Ribosomal protein</keyword>
<keyword id="KW-0694">RNA-binding</keyword>
<keyword id="KW-0699">rRNA-binding</keyword>
<sequence>MEVILLSKIKKLGDSGAVINVKSGYARNFLIPKGKAILANKKNIESFEAQRIALEKEKINELLIAQSRAEKLKKINSITILSKVGKEGKIFGSVGVRNIIKEIILLGIKINKKEIRLPNGLLRQVGEHIVVFQPHSKVSINFIVKIIAKN</sequence>